<sequence>MATSNSRPHLLQTHKPFSVVLAISITFFLLLLNKVNSAEILSFSFPKFASNQEDLLLQGDALVSSKGELQLTTVENGVPIWNSTGRALYYAPVHIWDKSTGRVASFATSFSFVVKAPVASKSADGIAFFLAPPNNQIQGPGGGHLGLFHSSGYNSSYQIIAVDFDTHINAWDPNTRHIGIDVNSINSTKTVTWGWQNGEVANVLISYQAATETLTVSLTYPSSQTSYILSAAVDLKSILPEWVRVGFTAATGLTTQYVETHDVLSWSFTSTLETGDCGAKDDNVHLVSYAFI</sequence>
<comment type="function">
    <text>Mannose/glucose-specific lectin.</text>
</comment>
<comment type="similarity">
    <text evidence="3">Belongs to the leguminous lectin family.</text>
</comment>
<name>LECS_STYJP</name>
<dbReference type="EMBL" id="U63011">
    <property type="protein sequence ID" value="AAB51441.1"/>
    <property type="molecule type" value="mRNA"/>
</dbReference>
<dbReference type="SMR" id="P93535"/>
<dbReference type="GlyConnect" id="552">
    <property type="glycosylation" value="1 N-Linked glycan"/>
</dbReference>
<dbReference type="GO" id="GO:0005537">
    <property type="term" value="F:D-mannose binding"/>
    <property type="evidence" value="ECO:0007669"/>
    <property type="project" value="UniProtKB-KW"/>
</dbReference>
<dbReference type="GO" id="GO:0046872">
    <property type="term" value="F:metal ion binding"/>
    <property type="evidence" value="ECO:0007669"/>
    <property type="project" value="UniProtKB-KW"/>
</dbReference>
<dbReference type="CDD" id="cd06899">
    <property type="entry name" value="lectin_legume_LecRK_Arcelin_ConA"/>
    <property type="match status" value="1"/>
</dbReference>
<dbReference type="Gene3D" id="2.60.120.200">
    <property type="match status" value="1"/>
</dbReference>
<dbReference type="InterPro" id="IPR013320">
    <property type="entry name" value="ConA-like_dom_sf"/>
</dbReference>
<dbReference type="InterPro" id="IPR016363">
    <property type="entry name" value="L-lectin"/>
</dbReference>
<dbReference type="InterPro" id="IPR000985">
    <property type="entry name" value="Lectin_LegA_CS"/>
</dbReference>
<dbReference type="InterPro" id="IPR019825">
    <property type="entry name" value="Lectin_legB_Mn/Ca_BS"/>
</dbReference>
<dbReference type="InterPro" id="IPR001220">
    <property type="entry name" value="Legume_lectin_dom"/>
</dbReference>
<dbReference type="InterPro" id="IPR050258">
    <property type="entry name" value="Leguminous_Lectin"/>
</dbReference>
<dbReference type="PANTHER" id="PTHR32401">
    <property type="entry name" value="CONCANAVALIN A-LIKE LECTIN FAMILY PROTEIN"/>
    <property type="match status" value="1"/>
</dbReference>
<dbReference type="PANTHER" id="PTHR32401:SF45">
    <property type="entry name" value="LECTIN"/>
    <property type="match status" value="1"/>
</dbReference>
<dbReference type="Pfam" id="PF00139">
    <property type="entry name" value="Lectin_legB"/>
    <property type="match status" value="1"/>
</dbReference>
<dbReference type="PIRSF" id="PIRSF002690">
    <property type="entry name" value="L-type_lectin_plant"/>
    <property type="match status" value="1"/>
</dbReference>
<dbReference type="SUPFAM" id="SSF49899">
    <property type="entry name" value="Concanavalin A-like lectins/glucanases"/>
    <property type="match status" value="1"/>
</dbReference>
<dbReference type="PROSITE" id="PS00308">
    <property type="entry name" value="LECTIN_LEGUME_ALPHA"/>
    <property type="match status" value="1"/>
</dbReference>
<dbReference type="PROSITE" id="PS00307">
    <property type="entry name" value="LECTIN_LEGUME_BETA"/>
    <property type="match status" value="1"/>
</dbReference>
<organism>
    <name type="scientific">Styphnolobium japonicum</name>
    <name type="common">Japanese pagoda tree</name>
    <name type="synonym">Sophora japonica</name>
    <dbReference type="NCBI Taxonomy" id="3897"/>
    <lineage>
        <taxon>Eukaryota</taxon>
        <taxon>Viridiplantae</taxon>
        <taxon>Streptophyta</taxon>
        <taxon>Embryophyta</taxon>
        <taxon>Tracheophyta</taxon>
        <taxon>Spermatophyta</taxon>
        <taxon>Magnoliopsida</taxon>
        <taxon>eudicotyledons</taxon>
        <taxon>Gunneridae</taxon>
        <taxon>Pentapetalae</taxon>
        <taxon>rosids</taxon>
        <taxon>fabids</taxon>
        <taxon>Fabales</taxon>
        <taxon>Fabaceae</taxon>
        <taxon>Papilionoideae</taxon>
        <taxon>Cladrastis clade</taxon>
        <taxon>Styphnolobium</taxon>
    </lineage>
</organism>
<feature type="signal peptide" evidence="2">
    <location>
        <begin position="1"/>
        <end position="37"/>
    </location>
</feature>
<feature type="chain" id="PRO_0000017655" description="Seed lectin">
    <location>
        <begin position="38"/>
        <end position="292"/>
    </location>
</feature>
<feature type="binding site" evidence="1">
    <location>
        <position position="163"/>
    </location>
    <ligand>
        <name>Mn(2+)</name>
        <dbReference type="ChEBI" id="CHEBI:29035"/>
    </ligand>
</feature>
<feature type="binding site" evidence="1">
    <location>
        <position position="165"/>
    </location>
    <ligand>
        <name>Ca(2+)</name>
        <dbReference type="ChEBI" id="CHEBI:29108"/>
    </ligand>
</feature>
<feature type="binding site" evidence="1">
    <location>
        <position position="165"/>
    </location>
    <ligand>
        <name>Mn(2+)</name>
        <dbReference type="ChEBI" id="CHEBI:29035"/>
    </ligand>
</feature>
<feature type="binding site" evidence="1">
    <location>
        <position position="167"/>
    </location>
    <ligand>
        <name>Ca(2+)</name>
        <dbReference type="ChEBI" id="CHEBI:29108"/>
    </ligand>
</feature>
<feature type="binding site" evidence="1">
    <location>
        <position position="169"/>
    </location>
    <ligand>
        <name>Ca(2+)</name>
        <dbReference type="ChEBI" id="CHEBI:29108"/>
    </ligand>
</feature>
<feature type="binding site" evidence="1">
    <location>
        <position position="172"/>
    </location>
    <ligand>
        <name>Ca(2+)</name>
        <dbReference type="ChEBI" id="CHEBI:29108"/>
    </ligand>
</feature>
<feature type="binding site" evidence="1">
    <location>
        <position position="172"/>
    </location>
    <ligand>
        <name>Mn(2+)</name>
        <dbReference type="ChEBI" id="CHEBI:29035"/>
    </ligand>
</feature>
<feature type="binding site" evidence="1">
    <location>
        <position position="177"/>
    </location>
    <ligand>
        <name>Mn(2+)</name>
        <dbReference type="ChEBI" id="CHEBI:29035"/>
    </ligand>
</feature>
<feature type="glycosylation site" description="N-linked (GlcNAc...) asparagine" evidence="2">
    <location>
        <position position="82"/>
    </location>
</feature>
<feature type="glycosylation site" description="N-linked (GlcNAc...) asparagine" evidence="2">
    <location>
        <position position="154"/>
    </location>
</feature>
<feature type="glycosylation site" description="N-linked (GlcNAc...) asparagine" evidence="2">
    <location>
        <position position="186"/>
    </location>
</feature>
<protein>
    <recommendedName>
        <fullName>Seed lectin</fullName>
    </recommendedName>
    <alternativeName>
        <fullName>LECSJASG</fullName>
    </alternativeName>
</protein>
<accession>P93535</accession>
<keyword id="KW-0106">Calcium</keyword>
<keyword id="KW-0325">Glycoprotein</keyword>
<keyword id="KW-0430">Lectin</keyword>
<keyword id="KW-0464">Manganese</keyword>
<keyword id="KW-0465">Mannose-binding</keyword>
<keyword id="KW-0479">Metal-binding</keyword>
<keyword id="KW-0732">Signal</keyword>
<reference key="1">
    <citation type="journal article" date="1997" name="Plant Mol. Biol.">
        <title>Molecular cloning of the bark and seed lectins from the Japanese pagoda tree (Sophora japonica).</title>
        <authorList>
            <person name="van Damme E.J."/>
            <person name="Barre A."/>
            <person name="Rouge P."/>
            <person name="Peumans W.J."/>
        </authorList>
    </citation>
    <scope>NUCLEOTIDE SEQUENCE [MRNA]</scope>
    <source>
        <tissue>Seed</tissue>
    </source>
</reference>
<evidence type="ECO:0000250" key="1"/>
<evidence type="ECO:0000255" key="2"/>
<evidence type="ECO:0000305" key="3"/>
<proteinExistence type="evidence at transcript level"/>